<accession>B0KCL4</accession>
<keyword id="KW-1185">Reference proteome</keyword>
<keyword id="KW-0687">Ribonucleoprotein</keyword>
<keyword id="KW-0689">Ribosomal protein</keyword>
<keyword id="KW-0694">RNA-binding</keyword>
<keyword id="KW-0699">rRNA-binding</keyword>
<comment type="function">
    <text evidence="1">One of the primary rRNA binding proteins, it binds directly to 16S rRNA central domain where it helps coordinate assembly of the platform of the 30S subunit.</text>
</comment>
<comment type="subunit">
    <text evidence="1">Part of the 30S ribosomal subunit. Contacts proteins S5 and S12.</text>
</comment>
<comment type="similarity">
    <text evidence="1">Belongs to the universal ribosomal protein uS8 family.</text>
</comment>
<protein>
    <recommendedName>
        <fullName evidence="1">Small ribosomal subunit protein uS8</fullName>
    </recommendedName>
    <alternativeName>
        <fullName evidence="2">30S ribosomal protein S8</fullName>
    </alternativeName>
</protein>
<organism>
    <name type="scientific">Thermoanaerobacter pseudethanolicus (strain ATCC 33223 / 39E)</name>
    <name type="common">Clostridium thermohydrosulfuricum</name>
    <dbReference type="NCBI Taxonomy" id="340099"/>
    <lineage>
        <taxon>Bacteria</taxon>
        <taxon>Bacillati</taxon>
        <taxon>Bacillota</taxon>
        <taxon>Clostridia</taxon>
        <taxon>Thermoanaerobacterales</taxon>
        <taxon>Thermoanaerobacteraceae</taxon>
        <taxon>Thermoanaerobacter</taxon>
    </lineage>
</organism>
<name>RS8_THEP3</name>
<reference key="1">
    <citation type="submission" date="2008-01" db="EMBL/GenBank/DDBJ databases">
        <title>Complete sequence of Thermoanaerobacter pseudethanolicus 39E.</title>
        <authorList>
            <person name="Copeland A."/>
            <person name="Lucas S."/>
            <person name="Lapidus A."/>
            <person name="Barry K."/>
            <person name="Glavina del Rio T."/>
            <person name="Dalin E."/>
            <person name="Tice H."/>
            <person name="Pitluck S."/>
            <person name="Bruce D."/>
            <person name="Goodwin L."/>
            <person name="Saunders E."/>
            <person name="Brettin T."/>
            <person name="Detter J.C."/>
            <person name="Han C."/>
            <person name="Schmutz J."/>
            <person name="Larimer F."/>
            <person name="Land M."/>
            <person name="Hauser L."/>
            <person name="Kyrpides N."/>
            <person name="Lykidis A."/>
            <person name="Hemme C."/>
            <person name="Fields M.W."/>
            <person name="He Z."/>
            <person name="Zhou J."/>
            <person name="Richardson P."/>
        </authorList>
    </citation>
    <scope>NUCLEOTIDE SEQUENCE [LARGE SCALE GENOMIC DNA]</scope>
    <source>
        <strain>ATCC 33223 / DSM 2355 / 39E</strain>
    </source>
</reference>
<proteinExistence type="inferred from homology"/>
<feature type="chain" id="PRO_1000140628" description="Small ribosomal subunit protein uS8">
    <location>
        <begin position="1"/>
        <end position="132"/>
    </location>
</feature>
<dbReference type="EMBL" id="CP000924">
    <property type="protein sequence ID" value="ABY94057.1"/>
    <property type="molecule type" value="Genomic_DNA"/>
</dbReference>
<dbReference type="RefSeq" id="WP_003868574.1">
    <property type="nucleotide sequence ID" value="NC_010321.1"/>
</dbReference>
<dbReference type="SMR" id="B0KCL4"/>
<dbReference type="STRING" id="340099.Teth39_0388"/>
<dbReference type="KEGG" id="tpd:Teth39_0388"/>
<dbReference type="eggNOG" id="COG0096">
    <property type="taxonomic scope" value="Bacteria"/>
</dbReference>
<dbReference type="HOGENOM" id="CLU_098428_0_2_9"/>
<dbReference type="Proteomes" id="UP000002156">
    <property type="component" value="Chromosome"/>
</dbReference>
<dbReference type="GO" id="GO:1990904">
    <property type="term" value="C:ribonucleoprotein complex"/>
    <property type="evidence" value="ECO:0007669"/>
    <property type="project" value="UniProtKB-KW"/>
</dbReference>
<dbReference type="GO" id="GO:0005840">
    <property type="term" value="C:ribosome"/>
    <property type="evidence" value="ECO:0007669"/>
    <property type="project" value="UniProtKB-KW"/>
</dbReference>
<dbReference type="GO" id="GO:0019843">
    <property type="term" value="F:rRNA binding"/>
    <property type="evidence" value="ECO:0007669"/>
    <property type="project" value="UniProtKB-UniRule"/>
</dbReference>
<dbReference type="GO" id="GO:0003735">
    <property type="term" value="F:structural constituent of ribosome"/>
    <property type="evidence" value="ECO:0007669"/>
    <property type="project" value="InterPro"/>
</dbReference>
<dbReference type="GO" id="GO:0006412">
    <property type="term" value="P:translation"/>
    <property type="evidence" value="ECO:0007669"/>
    <property type="project" value="UniProtKB-UniRule"/>
</dbReference>
<dbReference type="FunFam" id="3.30.1370.30:FF:000002">
    <property type="entry name" value="30S ribosomal protein S8"/>
    <property type="match status" value="1"/>
</dbReference>
<dbReference type="FunFam" id="3.30.1490.10:FF:000001">
    <property type="entry name" value="30S ribosomal protein S8"/>
    <property type="match status" value="1"/>
</dbReference>
<dbReference type="Gene3D" id="3.30.1370.30">
    <property type="match status" value="1"/>
</dbReference>
<dbReference type="Gene3D" id="3.30.1490.10">
    <property type="match status" value="1"/>
</dbReference>
<dbReference type="HAMAP" id="MF_01302_B">
    <property type="entry name" value="Ribosomal_uS8_B"/>
    <property type="match status" value="1"/>
</dbReference>
<dbReference type="InterPro" id="IPR000630">
    <property type="entry name" value="Ribosomal_uS8"/>
</dbReference>
<dbReference type="InterPro" id="IPR047863">
    <property type="entry name" value="Ribosomal_uS8_CS"/>
</dbReference>
<dbReference type="InterPro" id="IPR035987">
    <property type="entry name" value="Ribosomal_uS8_sf"/>
</dbReference>
<dbReference type="NCBIfam" id="NF001109">
    <property type="entry name" value="PRK00136.1"/>
    <property type="match status" value="1"/>
</dbReference>
<dbReference type="PANTHER" id="PTHR11758">
    <property type="entry name" value="40S RIBOSOMAL PROTEIN S15A"/>
    <property type="match status" value="1"/>
</dbReference>
<dbReference type="Pfam" id="PF00410">
    <property type="entry name" value="Ribosomal_S8"/>
    <property type="match status" value="1"/>
</dbReference>
<dbReference type="SUPFAM" id="SSF56047">
    <property type="entry name" value="Ribosomal protein S8"/>
    <property type="match status" value="1"/>
</dbReference>
<dbReference type="PROSITE" id="PS00053">
    <property type="entry name" value="RIBOSOMAL_S8"/>
    <property type="match status" value="1"/>
</dbReference>
<sequence>MVMTDPIADMLTRIRNANIARHETVEIPASNMKRAIAMIMLKEGFIKSVEEIDDGKGGILKLTLKYGPNKERVISGLKRISKPGLRVYARHDELPRVLGGLGIAIISTSKGIMTDKEARKAGVGGEVICYIW</sequence>
<evidence type="ECO:0000255" key="1">
    <source>
        <dbReference type="HAMAP-Rule" id="MF_01302"/>
    </source>
</evidence>
<evidence type="ECO:0000305" key="2"/>
<gene>
    <name evidence="1" type="primary">rpsH</name>
    <name type="ordered locus">Teth39_0388</name>
</gene>